<comment type="function">
    <text evidence="5">RNA-dependent RNA polymerase, which is responsible for the replication and transcription of the viral RNA genome using antigenomic RNA as an intermediate (By similarity). During transcription, synthesizes subgenomic RNAs and assures their capping by a cap-snatching mechanism, which involves the endonuclease activity cleaving the host capped pre-mRNAs. These short capped RNAs are then used as primers for viral transcription. Cleaves ssRNA substrates but not DNA (By similarity). Seems to downregulate the expression of its own and heterologous mRNAs through its endonuclease activity (By similarity).</text>
</comment>
<comment type="catalytic activity">
    <reaction evidence="7">
        <text>RNA(n) + a ribonucleoside 5'-triphosphate = RNA(n+1) + diphosphate</text>
        <dbReference type="Rhea" id="RHEA:21248"/>
        <dbReference type="Rhea" id="RHEA-COMP:14527"/>
        <dbReference type="Rhea" id="RHEA-COMP:17342"/>
        <dbReference type="ChEBI" id="CHEBI:33019"/>
        <dbReference type="ChEBI" id="CHEBI:61557"/>
        <dbReference type="ChEBI" id="CHEBI:140395"/>
        <dbReference type="EC" id="2.7.7.48"/>
    </reaction>
</comment>
<comment type="cofactor">
    <cofactor evidence="3">
        <name>Mn(2+)</name>
        <dbReference type="ChEBI" id="CHEBI:29035"/>
    </cofactor>
    <text evidence="3 8">For endonuclease activity. Binds 2 Mn(2+) ions in the active site. The divalent metal ions are crucial for catalytic activity (PubMed:31948728).</text>
</comment>
<comment type="cofactor">
    <cofactor evidence="1">
        <name>Mg(2+)</name>
        <dbReference type="ChEBI" id="CHEBI:18420"/>
    </cofactor>
    <cofactor evidence="1">
        <name>Mn(2+)</name>
        <dbReference type="ChEBI" id="CHEBI:29035"/>
    </cofactor>
    <text evidence="1">For polymerase activity.</text>
</comment>
<comment type="subunit">
    <text evidence="4">Interacts with the viral nucleoprotein.</text>
</comment>
<comment type="subcellular location">
    <subcellularLocation>
        <location evidence="6">Host cytoplasm</location>
        <location evidence="6">Host perinuclear region</location>
    </subcellularLocation>
</comment>
<comment type="domain">
    <text evidence="1 2 5">The N-terminus contains the endonuclease activity (endoN) (By similarity). The central region contains the RdRp activity (By similarity). The C-terminus contains the cap-binding region (By similarity).</text>
</comment>
<comment type="miscellaneous">
    <text evidence="9">Classified as His(+) endonuclease since it has a histidine upstream of the active site that coordinates the first cation.</text>
</comment>
<comment type="similarity">
    <text evidence="10">Belongs to the Bunyavirales RNA polymerase family.</text>
</comment>
<comment type="caution">
    <text evidence="11">The sequence was wrongly described as Hallnas B1 strain.</text>
</comment>
<organism>
    <name type="scientific">Puumala virus (strain Bank vole/Russia/CG1820/1984)</name>
    <dbReference type="NCBI Taxonomy" id="1337063"/>
    <lineage>
        <taxon>Viruses</taxon>
        <taxon>Riboviria</taxon>
        <taxon>Orthornavirae</taxon>
        <taxon>Negarnaviricota</taxon>
        <taxon>Polyploviricotina</taxon>
        <taxon>Ellioviricetes</taxon>
        <taxon>Bunyavirales</taxon>
        <taxon>Hantaviridae</taxon>
        <taxon>Mammantavirinae</taxon>
        <taxon>Orthohantavirus</taxon>
        <taxon>Orthohantavirus puumalaense</taxon>
    </lineage>
</organism>
<keyword id="KW-1157">Cap snatching</keyword>
<keyword id="KW-0255">Endonuclease</keyword>
<keyword id="KW-1035">Host cytoplasm</keyword>
<keyword id="KW-0378">Hydrolase</keyword>
<keyword id="KW-0460">Magnesium</keyword>
<keyword id="KW-0464">Manganese</keyword>
<keyword id="KW-0479">Metal-binding</keyword>
<keyword id="KW-0540">Nuclease</keyword>
<keyword id="KW-0547">Nucleotide-binding</keyword>
<keyword id="KW-0548">Nucleotidyltransferase</keyword>
<keyword id="KW-0696">RNA-directed RNA polymerase</keyword>
<keyword id="KW-0808">Transferase</keyword>
<keyword id="KW-0693">Viral RNA replication</keyword>
<reference key="1">
    <citation type="journal article" date="1991" name="Virology">
        <title>Primary structure of the large (L) RNA segment of nephropathia epidemica virus strain Hallnas B1 coding for the viral RNA polymerase.</title>
        <authorList>
            <person name="Stohwasser R."/>
            <person name="Raab K."/>
            <person name="Darai G."/>
            <person name="Bautz E.K.F."/>
        </authorList>
    </citation>
    <scope>NUCLEOTIDE SEQUENCE [GENOMIC RNA]</scope>
</reference>
<reference key="2">
    <citation type="journal article" date="2005" name="Arch. Virol.">
        <title>L protein, the RNA-dependent RNA polymerase of hantaviruses.</title>
        <authorList>
            <person name="Kukkonen S.K."/>
            <person name="Vaheri A."/>
            <person name="Plyusnin A."/>
        </authorList>
    </citation>
    <scope>REVIEW</scope>
</reference>
<reference key="3">
    <citation type="journal article" date="2017" name="Crit. Rev. Microbiol.">
        <title>Bunyaviridae RdRps: structure, motifs, and RNA synthesis machinery.</title>
        <authorList>
            <person name="Amroun A."/>
            <person name="Priet S."/>
            <person name="de Lamballerie X."/>
            <person name="Querat G."/>
        </authorList>
    </citation>
    <scope>REVIEW</scope>
</reference>
<reference key="4">
    <citation type="journal article" date="2020" name="Trends Microbiol.">
        <title>The Cap-Snatching Mechanism of Bunyaviruses.</title>
        <authorList>
            <person name="Olschewski S."/>
            <person name="Cusack S."/>
            <person name="Rosenthal M."/>
        </authorList>
    </citation>
    <scope>REVIEW</scope>
</reference>
<gene>
    <name type="primary">L</name>
</gene>
<evidence type="ECO:0000250" key="1">
    <source>
        <dbReference type="UniProtKB" id="A2SZS3"/>
    </source>
</evidence>
<evidence type="ECO:0000250" key="2">
    <source>
        <dbReference type="UniProtKB" id="I0DF35"/>
    </source>
</evidence>
<evidence type="ECO:0000250" key="3">
    <source>
        <dbReference type="UniProtKB" id="P23456"/>
    </source>
</evidence>
<evidence type="ECO:0000250" key="4">
    <source>
        <dbReference type="UniProtKB" id="Q89709"/>
    </source>
</evidence>
<evidence type="ECO:0000250" key="5">
    <source>
        <dbReference type="UniProtKB" id="Q9E005"/>
    </source>
</evidence>
<evidence type="ECO:0000250" key="6">
    <source>
        <dbReference type="UniProtKB" id="Q9YQR5"/>
    </source>
</evidence>
<evidence type="ECO:0000255" key="7">
    <source>
        <dbReference type="PROSITE-ProRule" id="PRU00539"/>
    </source>
</evidence>
<evidence type="ECO:0000269" key="8">
    <source>
    </source>
</evidence>
<evidence type="ECO:0000303" key="9">
    <source>
    </source>
</evidence>
<evidence type="ECO:0000305" key="10"/>
<evidence type="ECO:0000305" key="11">
    <source>
    </source>
</evidence>
<dbReference type="EC" id="2.7.7.48"/>
<dbReference type="EC" id="3.1.-.-" evidence="3"/>
<dbReference type="EMBL" id="M63194">
    <property type="status" value="NOT_ANNOTATED_CDS"/>
    <property type="molecule type" value="Genomic_RNA"/>
</dbReference>
<dbReference type="PIR" id="A40319">
    <property type="entry name" value="RRVUNE"/>
</dbReference>
<dbReference type="SMR" id="P27176"/>
<dbReference type="Proteomes" id="UP000008481">
    <property type="component" value="Genome"/>
</dbReference>
<dbReference type="GO" id="GO:0044220">
    <property type="term" value="C:host cell perinuclear region of cytoplasm"/>
    <property type="evidence" value="ECO:0007669"/>
    <property type="project" value="UniProtKB-SubCell"/>
</dbReference>
<dbReference type="GO" id="GO:0004519">
    <property type="term" value="F:endonuclease activity"/>
    <property type="evidence" value="ECO:0007669"/>
    <property type="project" value="UniProtKB-KW"/>
</dbReference>
<dbReference type="GO" id="GO:0046872">
    <property type="term" value="F:metal ion binding"/>
    <property type="evidence" value="ECO:0007669"/>
    <property type="project" value="UniProtKB-KW"/>
</dbReference>
<dbReference type="GO" id="GO:0000166">
    <property type="term" value="F:nucleotide binding"/>
    <property type="evidence" value="ECO:0007669"/>
    <property type="project" value="UniProtKB-KW"/>
</dbReference>
<dbReference type="GO" id="GO:0003968">
    <property type="term" value="F:RNA-directed RNA polymerase activity"/>
    <property type="evidence" value="ECO:0007669"/>
    <property type="project" value="UniProtKB-KW"/>
</dbReference>
<dbReference type="GO" id="GO:0075526">
    <property type="term" value="P:cap snatching"/>
    <property type="evidence" value="ECO:0007669"/>
    <property type="project" value="UniProtKB-KW"/>
</dbReference>
<dbReference type="GO" id="GO:0006351">
    <property type="term" value="P:DNA-templated transcription"/>
    <property type="evidence" value="ECO:0007669"/>
    <property type="project" value="InterPro"/>
</dbReference>
<dbReference type="GO" id="GO:0039689">
    <property type="term" value="P:negative stranded viral RNA replication"/>
    <property type="evidence" value="ECO:0000250"/>
    <property type="project" value="UniProtKB"/>
</dbReference>
<dbReference type="GO" id="GO:0039696">
    <property type="term" value="P:RNA-templated viral transcription"/>
    <property type="evidence" value="ECO:0000250"/>
    <property type="project" value="UniProtKB"/>
</dbReference>
<dbReference type="InterPro" id="IPR048006">
    <property type="entry name" value="CapSnatch_bunyavir"/>
</dbReference>
<dbReference type="InterPro" id="IPR054155">
    <property type="entry name" value="CapSnatchArena_N"/>
</dbReference>
<dbReference type="InterPro" id="IPR016268">
    <property type="entry name" value="RNA-dir_pol_hantavirus"/>
</dbReference>
<dbReference type="InterPro" id="IPR024378">
    <property type="entry name" value="RNA-dir_pol_N_hantavirus"/>
</dbReference>
<dbReference type="InterPro" id="IPR007099">
    <property type="entry name" value="RNA-dir_pol_NSvirus"/>
</dbReference>
<dbReference type="InterPro" id="IPR007322">
    <property type="entry name" value="RNA_pol_bunyavir"/>
</dbReference>
<dbReference type="NCBIfam" id="TIGR04202">
    <property type="entry name" value="capSnatchArena"/>
    <property type="match status" value="1"/>
</dbReference>
<dbReference type="Pfam" id="PF04196">
    <property type="entry name" value="Bunya_RdRp"/>
    <property type="match status" value="1"/>
</dbReference>
<dbReference type="Pfam" id="PF21991">
    <property type="entry name" value="capSnatchArena"/>
    <property type="match status" value="1"/>
</dbReference>
<dbReference type="Pfam" id="PF12426">
    <property type="entry name" value="DUF3674"/>
    <property type="match status" value="1"/>
</dbReference>
<dbReference type="PIRSF" id="PIRSF000825">
    <property type="entry name" value="L_HantaV"/>
    <property type="match status" value="1"/>
</dbReference>
<dbReference type="PROSITE" id="PS50525">
    <property type="entry name" value="RDRP_SSRNA_NEG_SEG"/>
    <property type="match status" value="1"/>
</dbReference>
<protein>
    <recommendedName>
        <fullName>RNA-directed RNA polymerase L</fullName>
        <shortName>Protein L</shortName>
        <ecNumber>2.7.7.48</ecNumber>
    </recommendedName>
    <alternativeName>
        <fullName>Large structural protein</fullName>
    </alternativeName>
    <alternativeName>
        <fullName evidence="10">RdRp</fullName>
    </alternativeName>
    <alternativeName>
        <fullName>Replicase</fullName>
    </alternativeName>
    <alternativeName>
        <fullName>Transcriptase</fullName>
    </alternativeName>
    <domain>
        <recommendedName>
            <fullName>cap-snatching endonuclease</fullName>
            <ecNumber evidence="3">3.1.-.-</ecNumber>
        </recommendedName>
    </domain>
</protein>
<name>L_PUUMG</name>
<sequence>MEKYREIHERVKEAVPGETSAVECLDLLDRLYAVRHDVVDQMIKHDWSDNKDKEQPIGLVLLMAGVPNDVIQSMEKRIIPGSPSGQILRSFFKMTPDNYKITGNLIEFIEVTVTADVARGVREKILKYQGGLEFIEQLLQIEAQKGNCQSGFRIKFDVVAIRTDGSNISTQWPSRRNEGVVQAMRLIQADINFVREHLIKNDERGALEAMFNLKFHVTGPKVRTFDIPNYRPQQLCQPVLENLVEYCKNWLGTDHAFAFKEVTGQRVFNVFRDEEELHASKYGHSRKPRNFLLCQISLQVPYLPSTIASDQYDTRLACSEILKNYPETPLQLLARDMAYKYITLDNEDIINYYNPRVYFKPTQNIKEPGTFKLNLSNMDPKSKALIDVISKDSKKGVFGELIDSIDVASQVQQNECAKTIEKILSDLEVNLGDSTAGLDQPKRTTGVDDILRKFYDNELVKYLISVIRKTTARHLGHLLRDITESLIAHAGLKRSKYWSAHGYAYGSVLLCILPSKSLEVAGSFIRFFTVFKEGLGLIDADNLDSKVEIDGVTWCFSKIISLDLNRLLALNIAFEKSLLATATWFQYYTEDQGHFPLQHALRSVFAFHFLLATSQKMKLCAIFDNLRYLIPAVTSTYSGFEPLIRKFFERPFKSALEVYLYNIIKTLLVSLAQNNKIRFYSRVRLLGLTVDQSSIGASGVYPSLMSRVVYKHYRSLISEATTCFFLFEKGLHGNLTEEAKIHLETVEWARKFREKERKLGSYIMEEGYHIQDVLNNQVVVEQQLFCQEVVELAAQELNTYLHAKSQVMASNIMNKHWDKPYFSQTRNISLKGMSGALQEDGHLAASVTLIEAIRFLNHSQNNPTVLELYEQTKKQKAQARIVRKYQRTEADRGFFITTLPTRVRLEIIEDYYDAIARVVPEEYISYGGETKILNIQQALEKALRWASGESEIQSSIGHSIKLKRKLMYVSADATKWSPGDNSAKFRRFTQSLYDGLRDDKLKNCVVDALRNIYETDFFISRKLHRYIDNMGELSDEVLDFLSFFPNKVSASIKGNWLQGNLNKCSSLFGAAVSLLFKRVWAKLYPELECFFEFAHHSDDALFIYGYLEPVDDGTEWFQYVTQQIQAGNFHWHAVNQEMWKSMFNLHEHILLMGSIKISPKKTTVSPTNAEFLSTFFEGCAVSIPFIKILLGSLSDLPGLGYFDDLAAAQSRCVKALDMGACPQLAQLGIVLCTSKVERLYGTAPGMVNNPTAYLKVDRSLIPIPLGGDGSMSIMELATAGIGMADKNILKNAFITYKHAKKDNDRYVLGLFKFLMSLSDDIFQHDRLGEFSFVGKVQWKVFTPKSEFEFYDQYSRKYLELWSEQHPVYDYIIPRGRDNLLVYLVRKLNDPSIVTAMTMQSPLQLRFRMQAKQHMKVCKLDGEWVTFREVLAAADAFASEYRPTLQDMELFQTLVNCTFSKEYAWRDFLNEVQCDVLTTRQIHRPKVARTFTVKEKDQTIQNPITAVIGYKYASKVDEISDVLDSAIHPDSLSTDLQLMREGVYRELGLDISQPNVLKKVAPLLYKSGKSRIVIVQGNVEGTAESICSYWLKTMSLVKTIKVKPKKEVLKAVSLYGKKEKAGDLTHLAAMRLCIEVWRWCKANEQDSVSWLKYLMFENKTLEQWIDSFCSRGVLPVDPEIQCLGLLVYDLKGQKGLLQIQANRRAYSGKQYDAYCVQTYNEETKLYEGDLRVTFNFGIDCARLEIFWDKREYILETSITQRNVLKILMEEVTKELLRCGMRFKTEQVNSSRSVVLFKTESGFEWGKPNVPCIVYRNCTLRTGLRVRQPTNKAFSITIQANGFRAMAQLDEENPRFLLAHAYHNLKDVRYQALQAVGNVWFKMTQHKLFINPIISAGLLENFMKGLPAAIPPAAYSLIMNKAKISVDLFMFNELLALINPQNVLNLDGIEETSEGYTTVSTISSTQWSEEVSLTMDDSDDDGDASQLDYTIDLDDIDFETIDLKEDIEHFLQDESAYTGDLLIQTEETEIRKLRGMIKILEPVKLIKSWVSKGLSIDKIYNPVNIILMTRYMSKHYNFHAKQLSLMDPYDLTEFESIVKGWGECVKDRFIELDQEAQRKVTEERVLPEDVLPDSLFSFRHADILLKRLFPRDSASSFY</sequence>
<feature type="chain" id="PRO_0000222022" description="RNA-directed RNA polymerase L">
    <location>
        <begin position="1"/>
        <end position="2156"/>
    </location>
</feature>
<feature type="domain" description="RdRp catalytic" evidence="7">
    <location>
        <begin position="956"/>
        <end position="1142"/>
    </location>
</feature>
<feature type="active site" description="For endonuclease activity" evidence="3">
    <location>
        <position position="124"/>
    </location>
</feature>
<feature type="binding site" evidence="5">
    <location>
        <position position="36"/>
    </location>
    <ligand>
        <name>Mn(2+)</name>
        <dbReference type="ChEBI" id="CHEBI:29035"/>
        <label>1</label>
    </ligand>
</feature>
<feature type="binding site" evidence="3">
    <location>
        <position position="54"/>
    </location>
    <ligand>
        <name>Mn(2+)</name>
        <dbReference type="ChEBI" id="CHEBI:29035"/>
        <label>2</label>
    </ligand>
</feature>
<feature type="binding site" evidence="5">
    <location>
        <position position="97"/>
    </location>
    <ligand>
        <name>Mn(2+)</name>
        <dbReference type="ChEBI" id="CHEBI:29035"/>
        <label>1</label>
    </ligand>
</feature>
<feature type="binding site" evidence="5">
    <location>
        <position position="97"/>
    </location>
    <ligand>
        <name>Mn(2+)</name>
        <dbReference type="ChEBI" id="CHEBI:29035"/>
        <label>2</label>
    </ligand>
</feature>
<feature type="binding site" evidence="5">
    <location>
        <position position="110"/>
    </location>
    <ligand>
        <name>Mn(2+)</name>
        <dbReference type="ChEBI" id="CHEBI:29035"/>
        <label>1</label>
    </ligand>
</feature>
<feature type="binding site" evidence="5">
    <location>
        <position position="111"/>
    </location>
    <ligand>
        <name>Mn(2+)</name>
        <dbReference type="ChEBI" id="CHEBI:29035"/>
        <label>1</label>
    </ligand>
</feature>
<feature type="binding site" evidence="2">
    <location>
        <position position="1099"/>
    </location>
    <ligand>
        <name>Mg(2+)</name>
        <dbReference type="ChEBI" id="CHEBI:18420"/>
        <note>catalytic; for RdRp activity</note>
    </ligand>
</feature>
<proteinExistence type="inferred from homology"/>
<organismHost>
    <name type="scientific">Homo sapiens</name>
    <name type="common">Human</name>
    <dbReference type="NCBI Taxonomy" id="9606"/>
</organismHost>
<organismHost>
    <name type="scientific">Myodes glareolus</name>
    <name type="common">Bank vole</name>
    <name type="synonym">Clethrionomys glareolus</name>
    <dbReference type="NCBI Taxonomy" id="447135"/>
</organismHost>
<accession>P27176</accession>